<dbReference type="EC" id="6.3.5.3" evidence="1"/>
<dbReference type="EMBL" id="AE016823">
    <property type="protein sequence ID" value="AAS70971.1"/>
    <property type="molecule type" value="Genomic_DNA"/>
</dbReference>
<dbReference type="RefSeq" id="WP_000409822.1">
    <property type="nucleotide sequence ID" value="NC_005823.1"/>
</dbReference>
<dbReference type="SMR" id="Q72PR5"/>
<dbReference type="GeneID" id="61142282"/>
<dbReference type="KEGG" id="lic:LIC_12402"/>
<dbReference type="HOGENOM" id="CLU_003100_0_1_12"/>
<dbReference type="UniPathway" id="UPA00074">
    <property type="reaction ID" value="UER00128"/>
</dbReference>
<dbReference type="Proteomes" id="UP000007037">
    <property type="component" value="Chromosome I"/>
</dbReference>
<dbReference type="GO" id="GO:0005737">
    <property type="term" value="C:cytoplasm"/>
    <property type="evidence" value="ECO:0007669"/>
    <property type="project" value="UniProtKB-SubCell"/>
</dbReference>
<dbReference type="GO" id="GO:0005524">
    <property type="term" value="F:ATP binding"/>
    <property type="evidence" value="ECO:0007669"/>
    <property type="project" value="UniProtKB-UniRule"/>
</dbReference>
<dbReference type="GO" id="GO:0000287">
    <property type="term" value="F:magnesium ion binding"/>
    <property type="evidence" value="ECO:0007669"/>
    <property type="project" value="UniProtKB-UniRule"/>
</dbReference>
<dbReference type="GO" id="GO:0004642">
    <property type="term" value="F:phosphoribosylformylglycinamidine synthase activity"/>
    <property type="evidence" value="ECO:0007669"/>
    <property type="project" value="UniProtKB-UniRule"/>
</dbReference>
<dbReference type="GO" id="GO:0006189">
    <property type="term" value="P:'de novo' IMP biosynthetic process"/>
    <property type="evidence" value="ECO:0007669"/>
    <property type="project" value="UniProtKB-UniRule"/>
</dbReference>
<dbReference type="CDD" id="cd02203">
    <property type="entry name" value="PurL_repeat1"/>
    <property type="match status" value="1"/>
</dbReference>
<dbReference type="CDD" id="cd02204">
    <property type="entry name" value="PurL_repeat2"/>
    <property type="match status" value="1"/>
</dbReference>
<dbReference type="FunFam" id="3.30.1330.10:FF:000004">
    <property type="entry name" value="Phosphoribosylformylglycinamidine synthase subunit PurL"/>
    <property type="match status" value="1"/>
</dbReference>
<dbReference type="Gene3D" id="3.90.650.10">
    <property type="entry name" value="PurM-like C-terminal domain"/>
    <property type="match status" value="2"/>
</dbReference>
<dbReference type="Gene3D" id="3.30.1330.10">
    <property type="entry name" value="PurM-like, N-terminal domain"/>
    <property type="match status" value="2"/>
</dbReference>
<dbReference type="HAMAP" id="MF_00420">
    <property type="entry name" value="PurL_2"/>
    <property type="match status" value="1"/>
</dbReference>
<dbReference type="InterPro" id="IPR010074">
    <property type="entry name" value="PRibForGlyAmidine_synth_PurL"/>
</dbReference>
<dbReference type="InterPro" id="IPR041609">
    <property type="entry name" value="PurL_linker"/>
</dbReference>
<dbReference type="InterPro" id="IPR010918">
    <property type="entry name" value="PurM-like_C_dom"/>
</dbReference>
<dbReference type="InterPro" id="IPR036676">
    <property type="entry name" value="PurM-like_C_sf"/>
</dbReference>
<dbReference type="InterPro" id="IPR016188">
    <property type="entry name" value="PurM-like_N"/>
</dbReference>
<dbReference type="InterPro" id="IPR036921">
    <property type="entry name" value="PurM-like_N_sf"/>
</dbReference>
<dbReference type="NCBIfam" id="TIGR01736">
    <property type="entry name" value="FGAM_synth_II"/>
    <property type="match status" value="1"/>
</dbReference>
<dbReference type="NCBIfam" id="NF002290">
    <property type="entry name" value="PRK01213.1"/>
    <property type="match status" value="1"/>
</dbReference>
<dbReference type="PANTHER" id="PTHR43555">
    <property type="entry name" value="PHOSPHORIBOSYLFORMYLGLYCINAMIDINE SYNTHASE SUBUNIT PURL"/>
    <property type="match status" value="1"/>
</dbReference>
<dbReference type="PANTHER" id="PTHR43555:SF1">
    <property type="entry name" value="PHOSPHORIBOSYLFORMYLGLYCINAMIDINE SYNTHASE SUBUNIT PURL"/>
    <property type="match status" value="1"/>
</dbReference>
<dbReference type="Pfam" id="PF00586">
    <property type="entry name" value="AIRS"/>
    <property type="match status" value="2"/>
</dbReference>
<dbReference type="Pfam" id="PF02769">
    <property type="entry name" value="AIRS_C"/>
    <property type="match status" value="2"/>
</dbReference>
<dbReference type="Pfam" id="PF18072">
    <property type="entry name" value="FGAR-AT_linker"/>
    <property type="match status" value="1"/>
</dbReference>
<dbReference type="PIRSF" id="PIRSF001587">
    <property type="entry name" value="FGAM_synthase_II"/>
    <property type="match status" value="1"/>
</dbReference>
<dbReference type="SUPFAM" id="SSF56042">
    <property type="entry name" value="PurM C-terminal domain-like"/>
    <property type="match status" value="2"/>
</dbReference>
<dbReference type="SUPFAM" id="SSF55326">
    <property type="entry name" value="PurM N-terminal domain-like"/>
    <property type="match status" value="2"/>
</dbReference>
<reference key="1">
    <citation type="journal article" date="2004" name="J. Bacteriol.">
        <title>Comparative genomics of two Leptospira interrogans serovars reveals novel insights into physiology and pathogenesis.</title>
        <authorList>
            <person name="Nascimento A.L.T.O."/>
            <person name="Ko A.I."/>
            <person name="Martins E.A.L."/>
            <person name="Monteiro-Vitorello C.B."/>
            <person name="Ho P.L."/>
            <person name="Haake D.A."/>
            <person name="Verjovski-Almeida S."/>
            <person name="Hartskeerl R.A."/>
            <person name="Marques M.V."/>
            <person name="Oliveira M.C."/>
            <person name="Menck C.F.M."/>
            <person name="Leite L.C.C."/>
            <person name="Carrer H."/>
            <person name="Coutinho L.L."/>
            <person name="Degrave W.M."/>
            <person name="Dellagostin O.A."/>
            <person name="El-Dorry H."/>
            <person name="Ferro E.S."/>
            <person name="Ferro M.I.T."/>
            <person name="Furlan L.R."/>
            <person name="Gamberini M."/>
            <person name="Giglioti E.A."/>
            <person name="Goes-Neto A."/>
            <person name="Goldman G.H."/>
            <person name="Goldman M.H.S."/>
            <person name="Harakava R."/>
            <person name="Jeronimo S.M.B."/>
            <person name="Junqueira-de-Azevedo I.L.M."/>
            <person name="Kimura E.T."/>
            <person name="Kuramae E.E."/>
            <person name="Lemos E.G.M."/>
            <person name="Lemos M.V.F."/>
            <person name="Marino C.L."/>
            <person name="Nunes L.R."/>
            <person name="de Oliveira R.C."/>
            <person name="Pereira G.G."/>
            <person name="Reis M.S."/>
            <person name="Schriefer A."/>
            <person name="Siqueira W.J."/>
            <person name="Sommer P."/>
            <person name="Tsai S.M."/>
            <person name="Simpson A.J.G."/>
            <person name="Ferro J.A."/>
            <person name="Camargo L.E.A."/>
            <person name="Kitajima J.P."/>
            <person name="Setubal J.C."/>
            <person name="Van Sluys M.A."/>
        </authorList>
    </citation>
    <scope>NUCLEOTIDE SEQUENCE [LARGE SCALE GENOMIC DNA]</scope>
    <source>
        <strain>Fiocruz L1-130</strain>
    </source>
</reference>
<accession>Q72PR5</accession>
<comment type="function">
    <text evidence="1">Part of the phosphoribosylformylglycinamidine synthase complex involved in the purines biosynthetic pathway. Catalyzes the ATP-dependent conversion of formylglycinamide ribonucleotide (FGAR) and glutamine to yield formylglycinamidine ribonucleotide (FGAM) and glutamate. The FGAM synthase complex is composed of three subunits. PurQ produces an ammonia molecule by converting glutamine to glutamate. PurL transfers the ammonia molecule to FGAR to form FGAM in an ATP-dependent manner. PurS interacts with PurQ and PurL and is thought to assist in the transfer of the ammonia molecule from PurQ to PurL.</text>
</comment>
<comment type="catalytic activity">
    <reaction evidence="1">
        <text>N(2)-formyl-N(1)-(5-phospho-beta-D-ribosyl)glycinamide + L-glutamine + ATP + H2O = 2-formamido-N(1)-(5-O-phospho-beta-D-ribosyl)acetamidine + L-glutamate + ADP + phosphate + H(+)</text>
        <dbReference type="Rhea" id="RHEA:17129"/>
        <dbReference type="ChEBI" id="CHEBI:15377"/>
        <dbReference type="ChEBI" id="CHEBI:15378"/>
        <dbReference type="ChEBI" id="CHEBI:29985"/>
        <dbReference type="ChEBI" id="CHEBI:30616"/>
        <dbReference type="ChEBI" id="CHEBI:43474"/>
        <dbReference type="ChEBI" id="CHEBI:58359"/>
        <dbReference type="ChEBI" id="CHEBI:147286"/>
        <dbReference type="ChEBI" id="CHEBI:147287"/>
        <dbReference type="ChEBI" id="CHEBI:456216"/>
        <dbReference type="EC" id="6.3.5.3"/>
    </reaction>
</comment>
<comment type="pathway">
    <text evidence="1">Purine metabolism; IMP biosynthesis via de novo pathway; 5-amino-1-(5-phospho-D-ribosyl)imidazole from N(2)-formyl-N(1)-(5-phospho-D-ribosyl)glycinamide: step 1/2.</text>
</comment>
<comment type="subunit">
    <text evidence="1">Monomer. Part of the FGAM synthase complex composed of 1 PurL, 1 PurQ and 2 PurS subunits.</text>
</comment>
<comment type="subcellular location">
    <subcellularLocation>
        <location evidence="1">Cytoplasm</location>
    </subcellularLocation>
</comment>
<comment type="similarity">
    <text evidence="1">Belongs to the FGAMS family.</text>
</comment>
<gene>
    <name evidence="1" type="primary">purL</name>
    <name type="ordered locus">LIC_12402</name>
</gene>
<protein>
    <recommendedName>
        <fullName evidence="1">Phosphoribosylformylglycinamidine synthase subunit PurL</fullName>
        <shortName evidence="1">FGAM synthase</shortName>
        <ecNumber evidence="1">6.3.5.3</ecNumber>
    </recommendedName>
    <alternativeName>
        <fullName evidence="1">Formylglycinamide ribonucleotide amidotransferase subunit II</fullName>
        <shortName evidence="1">FGAR amidotransferase II</shortName>
        <shortName evidence="1">FGAR-AT II</shortName>
    </alternativeName>
    <alternativeName>
        <fullName evidence="1">Glutamine amidotransferase PurL</fullName>
    </alternativeName>
    <alternativeName>
        <fullName evidence="1">Phosphoribosylformylglycinamidine synthase subunit II</fullName>
    </alternativeName>
</protein>
<name>PURL_LEPIC</name>
<evidence type="ECO:0000255" key="1">
    <source>
        <dbReference type="HAMAP-Rule" id="MF_00420"/>
    </source>
</evidence>
<sequence>MEKDVVSLEDALEHGLTKEEFQKIQEILGRIPNSTELGIFSAMWSEHCSYKNSILKLKTLPTTSDKLLAKAGEENAGAMDIGDGLAVVFKIESHNHPTAVEPYQGAATGVGGIMRDIFTMGARPIVSLNSLRFGNPDEPKNKYLLSRAVKGIGDYGNSLGIAVSGGELFIDECFSKNPLVNAMTVGVVRHDQMASATTGGQVGNSVYIVGATTGRDGIHGASFASKDLSKESESKRSAVQVGDPFMEKLLMEASLEAIQKGLLVGIQDMGAAGISCATSEMSAKGKTGMKIDLDLVPFRETGMNAYEAMLSESQERMLVVPKKGKESELVSIFEKWNLNAVKIGEVTADGMIEIYMGGKLKAKIPAESLVLGGGAPRYERETKRPSYLDAVKTWKPDEIPDVTKGANSKEILLKILSSWNVCSRKPITEQYDSEVGLVKLIGPGLDGGLSAIPGTNKALATATDCNSRYTYLDPYKGAEFAVCEAARNVYVTGATPYGVTNNLNFANPYIPENYYIFSECIRGMGDACRFLGLPVTGGNVSFYNESPEGPIFPTPTIGMVGILENKEKLIFNFPKEIGVELAVLGNFRPSLGGSEYLKKIHGQINGSIPELDIKEELELCKLILSLNESRILKSAKDLSLGGIAVALSKTVLFSGLGIESDLTSLRRNRLDLTLFGESSTAVLVGFDSLSKEDIRKQTEAYGLKFYPIGKTNSSGILEIKDAEIKISFQELSGPYEKGLEAVFAL</sequence>
<feature type="chain" id="PRO_0000100465" description="Phosphoribosylformylglycinamidine synthase subunit PurL">
    <location>
        <begin position="1"/>
        <end position="745"/>
    </location>
</feature>
<feature type="active site" evidence="1">
    <location>
        <position position="47"/>
    </location>
</feature>
<feature type="active site" description="Proton acceptor" evidence="1">
    <location>
        <position position="94"/>
    </location>
</feature>
<feature type="binding site" evidence="1">
    <location>
        <position position="50"/>
    </location>
    <ligand>
        <name>ATP</name>
        <dbReference type="ChEBI" id="CHEBI:30616"/>
    </ligand>
</feature>
<feature type="binding site" evidence="1">
    <location>
        <position position="90"/>
    </location>
    <ligand>
        <name>ATP</name>
        <dbReference type="ChEBI" id="CHEBI:30616"/>
    </ligand>
</feature>
<feature type="binding site" evidence="1">
    <location>
        <position position="92"/>
    </location>
    <ligand>
        <name>Mg(2+)</name>
        <dbReference type="ChEBI" id="CHEBI:18420"/>
        <label>1</label>
    </ligand>
</feature>
<feature type="binding site" evidence="1">
    <location>
        <begin position="93"/>
        <end position="96"/>
    </location>
    <ligand>
        <name>substrate</name>
    </ligand>
</feature>
<feature type="binding site" evidence="1">
    <location>
        <position position="115"/>
    </location>
    <ligand>
        <name>substrate</name>
    </ligand>
</feature>
<feature type="binding site" evidence="1">
    <location>
        <position position="116"/>
    </location>
    <ligand>
        <name>Mg(2+)</name>
        <dbReference type="ChEBI" id="CHEBI:18420"/>
        <label>2</label>
    </ligand>
</feature>
<feature type="binding site" evidence="1">
    <location>
        <position position="240"/>
    </location>
    <ligand>
        <name>substrate</name>
    </ligand>
</feature>
<feature type="binding site" evidence="1">
    <location>
        <position position="268"/>
    </location>
    <ligand>
        <name>Mg(2+)</name>
        <dbReference type="ChEBI" id="CHEBI:18420"/>
        <label>2</label>
    </ligand>
</feature>
<feature type="binding site" evidence="1">
    <location>
        <begin position="312"/>
        <end position="314"/>
    </location>
    <ligand>
        <name>substrate</name>
    </ligand>
</feature>
<feature type="binding site" evidence="1">
    <location>
        <position position="501"/>
    </location>
    <ligand>
        <name>ATP</name>
        <dbReference type="ChEBI" id="CHEBI:30616"/>
    </ligand>
</feature>
<feature type="binding site" evidence="1">
    <location>
        <position position="538"/>
    </location>
    <ligand>
        <name>ATP</name>
        <dbReference type="ChEBI" id="CHEBI:30616"/>
    </ligand>
</feature>
<feature type="binding site" evidence="1">
    <location>
        <position position="539"/>
    </location>
    <ligand>
        <name>Mg(2+)</name>
        <dbReference type="ChEBI" id="CHEBI:18420"/>
        <label>1</label>
    </ligand>
</feature>
<feature type="binding site" evidence="1">
    <location>
        <position position="541"/>
    </location>
    <ligand>
        <name>substrate</name>
    </ligand>
</feature>
<keyword id="KW-0067">ATP-binding</keyword>
<keyword id="KW-0963">Cytoplasm</keyword>
<keyword id="KW-0436">Ligase</keyword>
<keyword id="KW-0460">Magnesium</keyword>
<keyword id="KW-0479">Metal-binding</keyword>
<keyword id="KW-0547">Nucleotide-binding</keyword>
<keyword id="KW-0658">Purine biosynthesis</keyword>
<proteinExistence type="inferred from homology"/>
<organism>
    <name type="scientific">Leptospira interrogans serogroup Icterohaemorrhagiae serovar copenhageni (strain Fiocruz L1-130)</name>
    <dbReference type="NCBI Taxonomy" id="267671"/>
    <lineage>
        <taxon>Bacteria</taxon>
        <taxon>Pseudomonadati</taxon>
        <taxon>Spirochaetota</taxon>
        <taxon>Spirochaetia</taxon>
        <taxon>Leptospirales</taxon>
        <taxon>Leptospiraceae</taxon>
        <taxon>Leptospira</taxon>
    </lineage>
</organism>